<name>MANB_MYCPN</name>
<gene>
    <name type="primary">manB</name>
    <name type="synonym">cpsG</name>
    <name type="ordered locus">MPN_066</name>
    <name type="ORF">MP088</name>
</gene>
<keyword id="KW-0413">Isomerase</keyword>
<keyword id="KW-0460">Magnesium</keyword>
<keyword id="KW-0479">Metal-binding</keyword>
<keyword id="KW-0597">Phosphoprotein</keyword>
<keyword id="KW-1185">Reference proteome</keyword>
<accession>P75050</accession>
<protein>
    <recommendedName>
        <fullName>Phosphomannomutase</fullName>
        <shortName>PMM</shortName>
        <ecNumber>5.4.2.8</ecNumber>
    </recommendedName>
</protein>
<evidence type="ECO:0000250" key="1"/>
<evidence type="ECO:0000305" key="2"/>
<sequence>MNSNAYLEAQRWLSHPRVKPNLKEVITAMSAEEIEHFFSLKKPSFGTAGVRGKMAPGYHGMNVFSYAYLTQGYVNYIQSLNPTKKPLRFLVARDTRKHGALFNGIVCDVITSMGHVVYMFDNNEPTPTPLVSYVIKKYHFDGGVNVTASHNPKTDNGFKIYDGHGAQLLDFQTDQLIAMLPPVVTMLDFEPRGNNELLHFLDNEVVYKNYFDDLKESLVVDNDSFKNLPVVFTGLHGTSVKLLPRFLTYLGYSNIISVQPQNVFDANFANADHLNPESKDTWELARQYASNTKAKLMMAIDPDADRFAIAEWNPQTQDWHYFSGNESGVMVAYYKLKHKQFKRQPYIVTTVVSTDLVDKIAKKYGAFVKRTNVGFKFIGQAVNHFSKDNELVVAFEEAIGMMASDGLNREKDSFQAAAIMLEIARYCHNKGISLLEFYRGEIFGEFGDYYNWTVPHTIHGVNWKEKMEQVLHQLTTATIKEVVGHKITKIKNYVDINLVEYVLENGNWIKFRISGTEPKLKLYFNLSNGYLAALKHEAKKMHEFLVRLLNLDKA</sequence>
<comment type="catalytic activity">
    <reaction>
        <text>alpha-D-mannose 1-phosphate = D-mannose 6-phosphate</text>
        <dbReference type="Rhea" id="RHEA:11140"/>
        <dbReference type="ChEBI" id="CHEBI:58409"/>
        <dbReference type="ChEBI" id="CHEBI:58735"/>
        <dbReference type="EC" id="5.4.2.8"/>
    </reaction>
</comment>
<comment type="cofactor">
    <cofactor evidence="1">
        <name>Mg(2+)</name>
        <dbReference type="ChEBI" id="CHEBI:18420"/>
    </cofactor>
    <text evidence="1">Binds 1 Mg(2+) ion per subunit.</text>
</comment>
<comment type="similarity">
    <text evidence="2">Belongs to the phosphohexose mutase family.</text>
</comment>
<reference key="1">
    <citation type="journal article" date="1996" name="Nucleic Acids Res.">
        <title>Complete sequence analysis of the genome of the bacterium Mycoplasma pneumoniae.</title>
        <authorList>
            <person name="Himmelreich R."/>
            <person name="Hilbert H."/>
            <person name="Plagens H."/>
            <person name="Pirkl E."/>
            <person name="Li B.-C."/>
            <person name="Herrmann R."/>
        </authorList>
    </citation>
    <scope>NUCLEOTIDE SEQUENCE [LARGE SCALE GENOMIC DNA]</scope>
    <source>
        <strain>ATCC 29342 / M129 / Subtype 1</strain>
    </source>
</reference>
<proteinExistence type="inferred from homology"/>
<dbReference type="EC" id="5.4.2.8"/>
<dbReference type="EMBL" id="U00089">
    <property type="protein sequence ID" value="AAB95736.1"/>
    <property type="molecule type" value="Genomic_DNA"/>
</dbReference>
<dbReference type="PIR" id="S73414">
    <property type="entry name" value="S73414"/>
</dbReference>
<dbReference type="RefSeq" id="NP_109754.1">
    <property type="nucleotide sequence ID" value="NC_000912.1"/>
</dbReference>
<dbReference type="RefSeq" id="WP_010874423.1">
    <property type="nucleotide sequence ID" value="NZ_OU342337.1"/>
</dbReference>
<dbReference type="SMR" id="P75050"/>
<dbReference type="IntAct" id="P75050">
    <property type="interactions" value="3"/>
</dbReference>
<dbReference type="STRING" id="272634.MPN_066"/>
<dbReference type="EnsemblBacteria" id="AAB95736">
    <property type="protein sequence ID" value="AAB95736"/>
    <property type="gene ID" value="MPN_066"/>
</dbReference>
<dbReference type="KEGG" id="mpn:MPN_066"/>
<dbReference type="PATRIC" id="fig|272634.6.peg.67"/>
<dbReference type="HOGENOM" id="CLU_016950_0_0_14"/>
<dbReference type="OrthoDB" id="9806956at2"/>
<dbReference type="BioCyc" id="MetaCyc:MONOMER-621"/>
<dbReference type="BioCyc" id="MPNE272634:G1GJ3-103-MONOMER"/>
<dbReference type="Proteomes" id="UP000000808">
    <property type="component" value="Chromosome"/>
</dbReference>
<dbReference type="GO" id="GO:0000287">
    <property type="term" value="F:magnesium ion binding"/>
    <property type="evidence" value="ECO:0007669"/>
    <property type="project" value="InterPro"/>
</dbReference>
<dbReference type="GO" id="GO:0004615">
    <property type="term" value="F:phosphomannomutase activity"/>
    <property type="evidence" value="ECO:0007669"/>
    <property type="project" value="UniProtKB-EC"/>
</dbReference>
<dbReference type="GO" id="GO:0008973">
    <property type="term" value="F:phosphopentomutase activity"/>
    <property type="evidence" value="ECO:0007669"/>
    <property type="project" value="TreeGrafter"/>
</dbReference>
<dbReference type="GO" id="GO:0005975">
    <property type="term" value="P:carbohydrate metabolic process"/>
    <property type="evidence" value="ECO:0007669"/>
    <property type="project" value="InterPro"/>
</dbReference>
<dbReference type="GO" id="GO:0006166">
    <property type="term" value="P:purine ribonucleoside salvage"/>
    <property type="evidence" value="ECO:0007669"/>
    <property type="project" value="TreeGrafter"/>
</dbReference>
<dbReference type="CDD" id="cd05799">
    <property type="entry name" value="PGM2"/>
    <property type="match status" value="1"/>
</dbReference>
<dbReference type="Gene3D" id="3.40.120.10">
    <property type="entry name" value="Alpha-D-Glucose-1,6-Bisphosphate, subunit A, domain 3"/>
    <property type="match status" value="3"/>
</dbReference>
<dbReference type="Gene3D" id="3.30.310.50">
    <property type="entry name" value="Alpha-D-phosphohexomutase, C-terminal domain"/>
    <property type="match status" value="1"/>
</dbReference>
<dbReference type="InterPro" id="IPR005844">
    <property type="entry name" value="A-D-PHexomutase_a/b/a-I"/>
</dbReference>
<dbReference type="InterPro" id="IPR016055">
    <property type="entry name" value="A-D-PHexomutase_a/b/a-I/II/III"/>
</dbReference>
<dbReference type="InterPro" id="IPR005845">
    <property type="entry name" value="A-D-PHexomutase_a/b/a-II"/>
</dbReference>
<dbReference type="InterPro" id="IPR005846">
    <property type="entry name" value="A-D-PHexomutase_a/b/a-III"/>
</dbReference>
<dbReference type="InterPro" id="IPR036900">
    <property type="entry name" value="A-D-PHexomutase_C_sf"/>
</dbReference>
<dbReference type="InterPro" id="IPR016066">
    <property type="entry name" value="A-D-PHexomutase_CS"/>
</dbReference>
<dbReference type="PANTHER" id="PTHR45745:SF1">
    <property type="entry name" value="PHOSPHOGLUCOMUTASE 2B-RELATED"/>
    <property type="match status" value="1"/>
</dbReference>
<dbReference type="PANTHER" id="PTHR45745">
    <property type="entry name" value="PHOSPHOMANNOMUTASE 45A"/>
    <property type="match status" value="1"/>
</dbReference>
<dbReference type="Pfam" id="PF02878">
    <property type="entry name" value="PGM_PMM_I"/>
    <property type="match status" value="1"/>
</dbReference>
<dbReference type="Pfam" id="PF02879">
    <property type="entry name" value="PGM_PMM_II"/>
    <property type="match status" value="1"/>
</dbReference>
<dbReference type="Pfam" id="PF02880">
    <property type="entry name" value="PGM_PMM_III"/>
    <property type="match status" value="1"/>
</dbReference>
<dbReference type="SUPFAM" id="SSF55957">
    <property type="entry name" value="Phosphoglucomutase, C-terminal domain"/>
    <property type="match status" value="1"/>
</dbReference>
<dbReference type="SUPFAM" id="SSF53738">
    <property type="entry name" value="Phosphoglucomutase, first 3 domains"/>
    <property type="match status" value="3"/>
</dbReference>
<dbReference type="PROSITE" id="PS00710">
    <property type="entry name" value="PGM_PMM"/>
    <property type="match status" value="1"/>
</dbReference>
<organism>
    <name type="scientific">Mycoplasma pneumoniae (strain ATCC 29342 / M129 / Subtype 1)</name>
    <name type="common">Mycoplasmoides pneumoniae</name>
    <dbReference type="NCBI Taxonomy" id="272634"/>
    <lineage>
        <taxon>Bacteria</taxon>
        <taxon>Bacillati</taxon>
        <taxon>Mycoplasmatota</taxon>
        <taxon>Mycoplasmoidales</taxon>
        <taxon>Mycoplasmoidaceae</taxon>
        <taxon>Mycoplasmoides</taxon>
    </lineage>
</organism>
<feature type="chain" id="PRO_0000147830" description="Phosphomannomutase">
    <location>
        <begin position="1"/>
        <end position="554"/>
    </location>
</feature>
<feature type="active site" description="Phosphoserine intermediate" evidence="1">
    <location>
        <position position="149"/>
    </location>
</feature>
<feature type="binding site" description="via phosphate group" evidence="1">
    <location>
        <position position="149"/>
    </location>
    <ligand>
        <name>Mg(2+)</name>
        <dbReference type="ChEBI" id="CHEBI:18420"/>
    </ligand>
</feature>
<feature type="binding site" evidence="1">
    <location>
        <position position="301"/>
    </location>
    <ligand>
        <name>Mg(2+)</name>
        <dbReference type="ChEBI" id="CHEBI:18420"/>
    </ligand>
</feature>
<feature type="binding site" evidence="1">
    <location>
        <position position="303"/>
    </location>
    <ligand>
        <name>Mg(2+)</name>
        <dbReference type="ChEBI" id="CHEBI:18420"/>
    </ligand>
</feature>
<feature type="binding site" evidence="1">
    <location>
        <position position="305"/>
    </location>
    <ligand>
        <name>Mg(2+)</name>
        <dbReference type="ChEBI" id="CHEBI:18420"/>
    </ligand>
</feature>